<organism>
    <name type="scientific">Haemophilus influenzae (strain ATCC 51907 / DSM 11121 / KW20 / Rd)</name>
    <dbReference type="NCBI Taxonomy" id="71421"/>
    <lineage>
        <taxon>Bacteria</taxon>
        <taxon>Pseudomonadati</taxon>
        <taxon>Pseudomonadota</taxon>
        <taxon>Gammaproteobacteria</taxon>
        <taxon>Pasteurellales</taxon>
        <taxon>Pasteurellaceae</taxon>
        <taxon>Haemophilus</taxon>
    </lineage>
</organism>
<protein>
    <recommendedName>
        <fullName>UPF0324 membrane protein HI_1643</fullName>
    </recommendedName>
</protein>
<feature type="chain" id="PRO_0000157420" description="UPF0324 membrane protein HI_1643">
    <location>
        <begin position="1"/>
        <end position="338"/>
    </location>
</feature>
<feature type="transmembrane region" description="Helical" evidence="1">
    <location>
        <begin position="5"/>
        <end position="23"/>
    </location>
</feature>
<feature type="transmembrane region" description="Helical" evidence="1">
    <location>
        <begin position="33"/>
        <end position="55"/>
    </location>
</feature>
<feature type="transmembrane region" description="Helical" evidence="1">
    <location>
        <begin position="62"/>
        <end position="84"/>
    </location>
</feature>
<feature type="transmembrane region" description="Helical" evidence="1">
    <location>
        <begin position="94"/>
        <end position="116"/>
    </location>
</feature>
<feature type="transmembrane region" description="Helical" evidence="1">
    <location>
        <begin position="123"/>
        <end position="145"/>
    </location>
</feature>
<feature type="transmembrane region" description="Helical" evidence="1">
    <location>
        <begin position="155"/>
        <end position="177"/>
    </location>
</feature>
<feature type="transmembrane region" description="Helical" evidence="1">
    <location>
        <begin position="222"/>
        <end position="239"/>
    </location>
</feature>
<feature type="transmembrane region" description="Helical" evidence="1">
    <location>
        <begin position="254"/>
        <end position="273"/>
    </location>
</feature>
<feature type="transmembrane region" description="Helical" evidence="1">
    <location>
        <begin position="280"/>
        <end position="302"/>
    </location>
</feature>
<feature type="transmembrane region" description="Helical" evidence="1">
    <location>
        <begin position="312"/>
        <end position="334"/>
    </location>
</feature>
<reference key="1">
    <citation type="journal article" date="1995" name="Science">
        <title>Whole-genome random sequencing and assembly of Haemophilus influenzae Rd.</title>
        <authorList>
            <person name="Fleischmann R.D."/>
            <person name="Adams M.D."/>
            <person name="White O."/>
            <person name="Clayton R.A."/>
            <person name="Kirkness E.F."/>
            <person name="Kerlavage A.R."/>
            <person name="Bult C.J."/>
            <person name="Tomb J.-F."/>
            <person name="Dougherty B.A."/>
            <person name="Merrick J.M."/>
            <person name="McKenney K."/>
            <person name="Sutton G.G."/>
            <person name="FitzHugh W."/>
            <person name="Fields C.A."/>
            <person name="Gocayne J.D."/>
            <person name="Scott J.D."/>
            <person name="Shirley R."/>
            <person name="Liu L.-I."/>
            <person name="Glodek A."/>
            <person name="Kelley J.M."/>
            <person name="Weidman J.F."/>
            <person name="Phillips C.A."/>
            <person name="Spriggs T."/>
            <person name="Hedblom E."/>
            <person name="Cotton M.D."/>
            <person name="Utterback T.R."/>
            <person name="Hanna M.C."/>
            <person name="Nguyen D.T."/>
            <person name="Saudek D.M."/>
            <person name="Brandon R.C."/>
            <person name="Fine L.D."/>
            <person name="Fritchman J.L."/>
            <person name="Fuhrmann J.L."/>
            <person name="Geoghagen N.S.M."/>
            <person name="Gnehm C.L."/>
            <person name="McDonald L.A."/>
            <person name="Small K.V."/>
            <person name="Fraser C.M."/>
            <person name="Smith H.O."/>
            <person name="Venter J.C."/>
        </authorList>
    </citation>
    <scope>NUCLEOTIDE SEQUENCE [LARGE SCALE GENOMIC DNA]</scope>
    <source>
        <strain>ATCC 51907 / DSM 11121 / KW20 / Rd</strain>
    </source>
</reference>
<dbReference type="EMBL" id="L42023">
    <property type="protein sequence ID" value="AAC23290.1"/>
    <property type="molecule type" value="Genomic_DNA"/>
</dbReference>
<dbReference type="PIR" id="E64173">
    <property type="entry name" value="E64173"/>
</dbReference>
<dbReference type="RefSeq" id="NP_439785.1">
    <property type="nucleotide sequence ID" value="NC_000907.1"/>
</dbReference>
<dbReference type="STRING" id="71421.HI_1643"/>
<dbReference type="EnsemblBacteria" id="AAC23290">
    <property type="protein sequence ID" value="AAC23290"/>
    <property type="gene ID" value="HI_1643"/>
</dbReference>
<dbReference type="KEGG" id="hin:HI_1643"/>
<dbReference type="PATRIC" id="fig|71421.8.peg.1719"/>
<dbReference type="eggNOG" id="COG2855">
    <property type="taxonomic scope" value="Bacteria"/>
</dbReference>
<dbReference type="HOGENOM" id="CLU_033541_0_0_6"/>
<dbReference type="OrthoDB" id="9805703at2"/>
<dbReference type="PhylomeDB" id="P45290"/>
<dbReference type="BioCyc" id="HINF71421:G1GJ1-1660-MONOMER"/>
<dbReference type="Proteomes" id="UP000000579">
    <property type="component" value="Chromosome"/>
</dbReference>
<dbReference type="GO" id="GO:0005886">
    <property type="term" value="C:plasma membrane"/>
    <property type="evidence" value="ECO:0000318"/>
    <property type="project" value="GO_Central"/>
</dbReference>
<dbReference type="InterPro" id="IPR018383">
    <property type="entry name" value="UPF0324_pro"/>
</dbReference>
<dbReference type="InterPro" id="IPR004630">
    <property type="entry name" value="UPF0324_YeiH-like"/>
</dbReference>
<dbReference type="NCBIfam" id="TIGR00698">
    <property type="entry name" value="YeiH family putative sulfate export transporter"/>
    <property type="match status" value="1"/>
</dbReference>
<dbReference type="PANTHER" id="PTHR30106">
    <property type="entry name" value="INNER MEMBRANE PROTEIN YEIH-RELATED"/>
    <property type="match status" value="1"/>
</dbReference>
<dbReference type="PANTHER" id="PTHR30106:SF2">
    <property type="entry name" value="UPF0324 INNER MEMBRANE PROTEIN YEIH"/>
    <property type="match status" value="1"/>
</dbReference>
<dbReference type="Pfam" id="PF03601">
    <property type="entry name" value="Cons_hypoth698"/>
    <property type="match status" value="1"/>
</dbReference>
<evidence type="ECO:0000255" key="1"/>
<evidence type="ECO:0000305" key="2"/>
<name>Y1643_HAEIN</name>
<proteinExistence type="inferred from homology"/>
<sequence length="338" mass="36721">MNTRPFYFGLIFIAIIAVLANYLGSTDFSHHYHISALIIAILLGMAIGNTIYPQFSSQVEKGVLFAKGTLLRAGIVLYGFRLTFGDIADVGLNAVVTDAIMLISTFFLTALLGIRYLKMDKQLVYLTGAGCSICGAAAVMAAEPVTKAESHKVSVAIAVVVIFGTLSIFTYPFFYTWSQHLINAHQFGIYVGSSVHEVAQVYAIGGNIDPIVANTAVITKMLRVMMLAPFLFMLSWLLTRSDGISENTSHKITIPWFAVLFIGVAIFNSFDLLPKELVKLFVEIDSFLLISAMAALGLTTQASAIKKAGLKPLVLGVLIYLWLVIGGFLVNYGISKLI</sequence>
<gene>
    <name type="ordered locus">HI_1643</name>
</gene>
<keyword id="KW-1003">Cell membrane</keyword>
<keyword id="KW-0472">Membrane</keyword>
<keyword id="KW-1185">Reference proteome</keyword>
<keyword id="KW-0812">Transmembrane</keyword>
<keyword id="KW-1133">Transmembrane helix</keyword>
<accession>P45290</accession>
<comment type="subcellular location">
    <subcellularLocation>
        <location evidence="2">Cell membrane</location>
        <topology evidence="2">Multi-pass membrane protein</topology>
    </subcellularLocation>
</comment>
<comment type="similarity">
    <text evidence="2">Belongs to the UPF0324 family.</text>
</comment>